<sequence>MRGIILAGGSGTRLHPLTIGVSKQLLPVYDKPLVYYPLSTLIMAGIRDILVITTPADAPAFRRLLGDGSDFGVNLSYAAQNEPEGLAQAFLIGADHIGNDTVALALGDNIFYGPGLGTSLRRFEHVSGGAIFAYWVANPSAYGVVEFDADGKAVSLEEKPKTPKSHYAVPGLYFYDNTVIDIARSLKKSARGEYEITEVNQIYLNRGQLSVEVLARGTAWLDTGTFDSLLDASDFVRTIELRQGLKVGAPEEIAWRAGFIDDDQLATRAKELLKSGYGHYLLQLLDRE</sequence>
<organism>
    <name type="scientific">Mycolicibacterium smegmatis (strain ATCC 700084 / mc(2)155)</name>
    <name type="common">Mycobacterium smegmatis</name>
    <dbReference type="NCBI Taxonomy" id="246196"/>
    <lineage>
        <taxon>Bacteria</taxon>
        <taxon>Bacillati</taxon>
        <taxon>Actinomycetota</taxon>
        <taxon>Actinomycetes</taxon>
        <taxon>Mycobacteriales</taxon>
        <taxon>Mycobacteriaceae</taxon>
        <taxon>Mycolicibacterium</taxon>
    </lineage>
</organism>
<keyword id="KW-0460">Magnesium</keyword>
<keyword id="KW-0479">Metal-binding</keyword>
<keyword id="KW-0548">Nucleotidyltransferase</keyword>
<keyword id="KW-1185">Reference proteome</keyword>
<keyword id="KW-0808">Transferase</keyword>
<comment type="function">
    <text evidence="2">Catalyzes the conversion of glucose-1-phosphate and dTTP to dTDP-glucose and pyrophosphate. Involved in the biosynthesis of the dTDP-L-rhamnose which is a component of the critical linker, D-N-acetylglucosamine-L-rhamnose disaccharide, which connects the galactan region of arabinogalactan to peptidoglycan via a phosphodiester linkage.</text>
</comment>
<comment type="catalytic activity">
    <reaction evidence="2">
        <text>dTTP + alpha-D-glucose 1-phosphate + H(+) = dTDP-alpha-D-glucose + diphosphate</text>
        <dbReference type="Rhea" id="RHEA:15225"/>
        <dbReference type="ChEBI" id="CHEBI:15378"/>
        <dbReference type="ChEBI" id="CHEBI:33019"/>
        <dbReference type="ChEBI" id="CHEBI:37568"/>
        <dbReference type="ChEBI" id="CHEBI:57477"/>
        <dbReference type="ChEBI" id="CHEBI:58601"/>
        <dbReference type="EC" id="2.7.7.24"/>
    </reaction>
</comment>
<comment type="cofactor">
    <cofactor evidence="1">
        <name>Mg(2+)</name>
        <dbReference type="ChEBI" id="CHEBI:18420"/>
    </cofactor>
    <text evidence="1">Binds 1 Mg(2+) ion per subunit.</text>
</comment>
<comment type="pathway">
    <text evidence="4">Carbohydrate biosynthesis; dTDP-L-rhamnose biosynthesis.</text>
</comment>
<comment type="similarity">
    <text evidence="3">Belongs to the glucose-1-phosphate thymidylyltransferase family.</text>
</comment>
<evidence type="ECO:0000250" key="1">
    <source>
        <dbReference type="UniProtKB" id="P9WH13"/>
    </source>
</evidence>
<evidence type="ECO:0000269" key="2">
    <source>
    </source>
</evidence>
<evidence type="ECO:0000305" key="3"/>
<evidence type="ECO:0000305" key="4">
    <source>
    </source>
</evidence>
<proteinExistence type="evidence at protein level"/>
<name>RMLA_MYCS2</name>
<dbReference type="EC" id="2.7.7.24" evidence="2"/>
<dbReference type="EMBL" id="AY439015">
    <property type="protein sequence ID" value="ABB72064.1"/>
    <property type="molecule type" value="Genomic_DNA"/>
</dbReference>
<dbReference type="EMBL" id="CP000480">
    <property type="protein sequence ID" value="ABK72771.1"/>
    <property type="molecule type" value="Genomic_DNA"/>
</dbReference>
<dbReference type="EMBL" id="CP001663">
    <property type="protein sequence ID" value="AFP36858.1"/>
    <property type="molecule type" value="Genomic_DNA"/>
</dbReference>
<dbReference type="RefSeq" id="WP_011726901.1">
    <property type="nucleotide sequence ID" value="NZ_SIJM01000018.1"/>
</dbReference>
<dbReference type="RefSeq" id="YP_884797.1">
    <property type="nucleotide sequence ID" value="NC_008596.1"/>
</dbReference>
<dbReference type="SMR" id="A0QPF9"/>
<dbReference type="STRING" id="246196.MSMEG_0384"/>
<dbReference type="PaxDb" id="246196-MSMEI_0377"/>
<dbReference type="GeneID" id="93455308"/>
<dbReference type="KEGG" id="msb:LJ00_01925"/>
<dbReference type="KEGG" id="msg:MSMEI_0377"/>
<dbReference type="KEGG" id="msm:MSMEG_0384"/>
<dbReference type="PATRIC" id="fig|246196.19.peg.381"/>
<dbReference type="eggNOG" id="COG1209">
    <property type="taxonomic scope" value="Bacteria"/>
</dbReference>
<dbReference type="OrthoDB" id="9803871at2"/>
<dbReference type="UniPathway" id="UPA00124"/>
<dbReference type="PHI-base" id="PHI:11319"/>
<dbReference type="Proteomes" id="UP000000757">
    <property type="component" value="Chromosome"/>
</dbReference>
<dbReference type="Proteomes" id="UP000006158">
    <property type="component" value="Chromosome"/>
</dbReference>
<dbReference type="GO" id="GO:0008879">
    <property type="term" value="F:glucose-1-phosphate thymidylyltransferase activity"/>
    <property type="evidence" value="ECO:0000314"/>
    <property type="project" value="UniProtKB"/>
</dbReference>
<dbReference type="GO" id="GO:0000287">
    <property type="term" value="F:magnesium ion binding"/>
    <property type="evidence" value="ECO:0000250"/>
    <property type="project" value="UniProtKB"/>
</dbReference>
<dbReference type="GO" id="GO:0019305">
    <property type="term" value="P:dTDP-rhamnose biosynthetic process"/>
    <property type="evidence" value="ECO:0007669"/>
    <property type="project" value="UniProtKB-UniPathway"/>
</dbReference>
<dbReference type="GO" id="GO:0000271">
    <property type="term" value="P:polysaccharide biosynthetic process"/>
    <property type="evidence" value="ECO:0000314"/>
    <property type="project" value="UniProtKB"/>
</dbReference>
<dbReference type="GO" id="GO:0019300">
    <property type="term" value="P:rhamnose biosynthetic process"/>
    <property type="evidence" value="ECO:0000314"/>
    <property type="project" value="UniProtKB"/>
</dbReference>
<dbReference type="CDD" id="cd02538">
    <property type="entry name" value="G1P_TT_short"/>
    <property type="match status" value="1"/>
</dbReference>
<dbReference type="FunFam" id="3.90.550.10:FF:000023">
    <property type="entry name" value="Glucose-1-phosphate thymidylyltransferase"/>
    <property type="match status" value="1"/>
</dbReference>
<dbReference type="Gene3D" id="3.90.550.10">
    <property type="entry name" value="Spore Coat Polysaccharide Biosynthesis Protein SpsA, Chain A"/>
    <property type="match status" value="1"/>
</dbReference>
<dbReference type="InterPro" id="IPR005907">
    <property type="entry name" value="G1P_thy_trans_s"/>
</dbReference>
<dbReference type="InterPro" id="IPR005835">
    <property type="entry name" value="NTP_transferase_dom"/>
</dbReference>
<dbReference type="InterPro" id="IPR029044">
    <property type="entry name" value="Nucleotide-diphossugar_trans"/>
</dbReference>
<dbReference type="NCBIfam" id="TIGR01207">
    <property type="entry name" value="rmlA"/>
    <property type="match status" value="1"/>
</dbReference>
<dbReference type="PANTHER" id="PTHR43532">
    <property type="entry name" value="GLUCOSE-1-PHOSPHATE THYMIDYLYLTRANSFERASE"/>
    <property type="match status" value="1"/>
</dbReference>
<dbReference type="PANTHER" id="PTHR43532:SF1">
    <property type="entry name" value="GLUCOSE-1-PHOSPHATE THYMIDYLYLTRANSFERASE 1"/>
    <property type="match status" value="1"/>
</dbReference>
<dbReference type="Pfam" id="PF00483">
    <property type="entry name" value="NTP_transferase"/>
    <property type="match status" value="1"/>
</dbReference>
<dbReference type="SUPFAM" id="SSF53448">
    <property type="entry name" value="Nucleotide-diphospho-sugar transferases"/>
    <property type="match status" value="1"/>
</dbReference>
<accession>A0QPF9</accession>
<accession>I7FD92</accession>
<gene>
    <name type="primary">rmlA</name>
    <name type="synonym">rfbA</name>
    <name type="ordered locus">MSMEG_0384</name>
    <name type="ordered locus">MSMEI_0377</name>
</gene>
<reference key="1">
    <citation type="journal article" date="2005" name="Mol. Microbiol.">
        <title>Gap, a mycobacterial specific integral membrane protein, is required for glycolipid transport to the cell surface.</title>
        <authorList>
            <person name="Sonden B."/>
            <person name="Kocincova D."/>
            <person name="Deshayes C."/>
            <person name="Euphrasie D."/>
            <person name="Rhayat L."/>
            <person name="Laval F."/>
            <person name="Frehel C."/>
            <person name="Daffe M."/>
            <person name="Etienne G."/>
            <person name="Reyrat J.M."/>
        </authorList>
    </citation>
    <scope>NUCLEOTIDE SEQUENCE [GENOMIC DNA]</scope>
</reference>
<reference key="2">
    <citation type="submission" date="2006-10" db="EMBL/GenBank/DDBJ databases">
        <authorList>
            <person name="Fleischmann R.D."/>
            <person name="Dodson R.J."/>
            <person name="Haft D.H."/>
            <person name="Merkel J.S."/>
            <person name="Nelson W.C."/>
            <person name="Fraser C.M."/>
        </authorList>
    </citation>
    <scope>NUCLEOTIDE SEQUENCE [LARGE SCALE GENOMIC DNA]</scope>
    <source>
        <strain>ATCC 700084 / mc(2)155</strain>
    </source>
</reference>
<reference key="3">
    <citation type="journal article" date="2007" name="Genome Biol.">
        <title>Interrupted coding sequences in Mycobacterium smegmatis: authentic mutations or sequencing errors?</title>
        <authorList>
            <person name="Deshayes C."/>
            <person name="Perrodou E."/>
            <person name="Gallien S."/>
            <person name="Euphrasie D."/>
            <person name="Schaeffer C."/>
            <person name="Van-Dorsselaer A."/>
            <person name="Poch O."/>
            <person name="Lecompte O."/>
            <person name="Reyrat J.-M."/>
        </authorList>
    </citation>
    <scope>NUCLEOTIDE SEQUENCE [LARGE SCALE GENOMIC DNA]</scope>
    <source>
        <strain>ATCC 700084 / mc(2)155</strain>
    </source>
</reference>
<reference key="4">
    <citation type="journal article" date="2009" name="Genome Res.">
        <title>Ortho-proteogenomics: multiple proteomes investigation through orthology and a new MS-based protocol.</title>
        <authorList>
            <person name="Gallien S."/>
            <person name="Perrodou E."/>
            <person name="Carapito C."/>
            <person name="Deshayes C."/>
            <person name="Reyrat J.-M."/>
            <person name="Van Dorsselaer A."/>
            <person name="Poch O."/>
            <person name="Schaeffer C."/>
            <person name="Lecompte O."/>
        </authorList>
    </citation>
    <scope>NUCLEOTIDE SEQUENCE [LARGE SCALE GENOMIC DNA]</scope>
    <source>
        <strain>ATCC 700084 / mc(2)155</strain>
    </source>
</reference>
<reference key="5">
    <citation type="journal article" date="1997" name="Microbiology">
        <title>Determination of the pathway for rhamnose biosynthesis in mycobacteria: cloning, sequencing and expression of the Mycobacterium tuberculosis gene encoding alpha-D-glucose-1-phosphate thymidylyltransferase.</title>
        <authorList>
            <person name="Ma Y."/>
            <person name="Mills J.A."/>
            <person name="Belisle J.T."/>
            <person name="Vissa V."/>
            <person name="Howell M."/>
            <person name="Bowlin K."/>
            <person name="Scherman M.S."/>
            <person name="McNeil M."/>
        </authorList>
    </citation>
    <scope>FUNCTION AS A THYMIDYLYLTRANSFERASE</scope>
    <scope>CATALYTIC ACTIVITY</scope>
</reference>
<feature type="chain" id="PRO_0000395346" description="Glucose-1-phosphate thymidylyltransferase">
    <location>
        <begin position="1"/>
        <end position="288"/>
    </location>
</feature>
<feature type="binding site" evidence="1">
    <location>
        <position position="8"/>
    </location>
    <ligand>
        <name>dTDP-alpha-D-glucose</name>
        <dbReference type="ChEBI" id="CHEBI:57477"/>
    </ligand>
</feature>
<feature type="binding site" evidence="1">
    <location>
        <position position="8"/>
    </location>
    <ligand>
        <name>dTTP</name>
        <dbReference type="ChEBI" id="CHEBI:37568"/>
    </ligand>
</feature>
<feature type="binding site" evidence="1">
    <location>
        <position position="11"/>
    </location>
    <ligand>
        <name>dTTP</name>
        <dbReference type="ChEBI" id="CHEBI:37568"/>
    </ligand>
</feature>
<feature type="binding site" evidence="1">
    <location>
        <position position="12"/>
    </location>
    <ligand>
        <name>dTTP</name>
        <dbReference type="ChEBI" id="CHEBI:37568"/>
    </ligand>
</feature>
<feature type="binding site" evidence="1">
    <location>
        <position position="13"/>
    </location>
    <ligand>
        <name>dTTP</name>
        <dbReference type="ChEBI" id="CHEBI:37568"/>
    </ligand>
</feature>
<feature type="binding site" evidence="1">
    <location>
        <position position="23"/>
    </location>
    <ligand>
        <name>dTDP-alpha-D-glucose</name>
        <dbReference type="ChEBI" id="CHEBI:57477"/>
    </ligand>
</feature>
<feature type="binding site" evidence="1">
    <location>
        <position position="23"/>
    </location>
    <ligand>
        <name>dTTP</name>
        <dbReference type="ChEBI" id="CHEBI:37568"/>
    </ligand>
</feature>
<feature type="binding site" evidence="1">
    <location>
        <position position="24"/>
    </location>
    <ligand>
        <name>dTDP-alpha-D-glucose</name>
        <dbReference type="ChEBI" id="CHEBI:57477"/>
    </ligand>
</feature>
<feature type="binding site" evidence="1">
    <location>
        <position position="24"/>
    </location>
    <ligand>
        <name>dTTP</name>
        <dbReference type="ChEBI" id="CHEBI:37568"/>
    </ligand>
</feature>
<feature type="binding site" evidence="1">
    <location>
        <position position="80"/>
    </location>
    <ligand>
        <name>dTDP-alpha-D-glucose</name>
        <dbReference type="ChEBI" id="CHEBI:57477"/>
    </ligand>
</feature>
<feature type="binding site" evidence="1">
    <location>
        <position position="80"/>
    </location>
    <ligand>
        <name>dTTP</name>
        <dbReference type="ChEBI" id="CHEBI:37568"/>
    </ligand>
</feature>
<feature type="binding site" evidence="1">
    <location>
        <position position="85"/>
    </location>
    <ligand>
        <name>dTDP-alpha-D-glucose</name>
        <dbReference type="ChEBI" id="CHEBI:57477"/>
    </ligand>
</feature>
<feature type="binding site" evidence="1">
    <location>
        <position position="85"/>
    </location>
    <ligand>
        <name>dTTP</name>
        <dbReference type="ChEBI" id="CHEBI:37568"/>
    </ligand>
</feature>
<feature type="binding site" evidence="1">
    <location>
        <position position="108"/>
    </location>
    <ligand>
        <name>dTDP-alpha-D-glucose</name>
        <dbReference type="ChEBI" id="CHEBI:57477"/>
    </ligand>
</feature>
<feature type="binding site" evidence="1">
    <location>
        <position position="108"/>
    </location>
    <ligand>
        <name>dTTP</name>
        <dbReference type="ChEBI" id="CHEBI:37568"/>
    </ligand>
</feature>
<feature type="binding site" evidence="1">
    <location>
        <position position="108"/>
    </location>
    <ligand>
        <name>Mg(2+)</name>
        <dbReference type="ChEBI" id="CHEBI:18420"/>
    </ligand>
</feature>
<feature type="binding site" evidence="1">
    <location>
        <position position="109"/>
    </location>
    <ligand>
        <name>dTDP-alpha-D-glucose</name>
        <dbReference type="ChEBI" id="CHEBI:57477"/>
    </ligand>
</feature>
<feature type="binding site" evidence="1">
    <location>
        <position position="143"/>
    </location>
    <ligand>
        <name>dTDP-alpha-D-glucose</name>
        <dbReference type="ChEBI" id="CHEBI:57477"/>
    </ligand>
</feature>
<feature type="binding site" evidence="1">
    <location>
        <position position="158"/>
    </location>
    <ligand>
        <name>dTDP-alpha-D-glucose</name>
        <dbReference type="ChEBI" id="CHEBI:57477"/>
    </ligand>
</feature>
<feature type="binding site" evidence="1">
    <location>
        <position position="159"/>
    </location>
    <ligand>
        <name>dTDP-alpha-D-glucose</name>
        <dbReference type="ChEBI" id="CHEBI:57477"/>
    </ligand>
</feature>
<feature type="binding site" evidence="1">
    <location>
        <position position="169"/>
    </location>
    <ligand>
        <name>dTDP-alpha-D-glucose</name>
        <dbReference type="ChEBI" id="CHEBI:57477"/>
    </ligand>
</feature>
<feature type="binding site" evidence="1">
    <location>
        <position position="222"/>
    </location>
    <ligand>
        <name>dTDP-alpha-D-glucose</name>
        <dbReference type="ChEBI" id="CHEBI:57477"/>
    </ligand>
</feature>
<feature type="binding site" evidence="1">
    <location>
        <position position="222"/>
    </location>
    <ligand>
        <name>Mg(2+)</name>
        <dbReference type="ChEBI" id="CHEBI:18420"/>
    </ligand>
</feature>
<protein>
    <recommendedName>
        <fullName>Glucose-1-phosphate thymidylyltransferase</fullName>
        <ecNumber evidence="2">2.7.7.24</ecNumber>
    </recommendedName>
    <alternativeName>
        <fullName>dTDP-glucose pyrophosphorylase</fullName>
    </alternativeName>
    <alternativeName>
        <fullName>dTDP-glucose synthase</fullName>
    </alternativeName>
</protein>